<sequence length="103" mass="11409">MSGRGKGGKGLGKGGAKRHRKVLRDNIQGITKPAIRRLARRGGVKRISGLIYEETRGVLKIFLENVIRDAVTYTEHARRKTVTAMDVVYALKRQGRTLYGFGG</sequence>
<organism>
    <name type="scientific">Zea mays</name>
    <name type="common">Maize</name>
    <dbReference type="NCBI Taxonomy" id="4577"/>
    <lineage>
        <taxon>Eukaryota</taxon>
        <taxon>Viridiplantae</taxon>
        <taxon>Streptophyta</taxon>
        <taxon>Embryophyta</taxon>
        <taxon>Tracheophyta</taxon>
        <taxon>Spermatophyta</taxon>
        <taxon>Magnoliopsida</taxon>
        <taxon>Liliopsida</taxon>
        <taxon>Poales</taxon>
        <taxon>Poaceae</taxon>
        <taxon>PACMAD clade</taxon>
        <taxon>Panicoideae</taxon>
        <taxon>Andropogonodae</taxon>
        <taxon>Andropogoneae</taxon>
        <taxon>Tripsacinae</taxon>
        <taxon>Zea</taxon>
    </lineage>
</organism>
<proteinExistence type="evidence at protein level"/>
<reference key="1">
    <citation type="journal article" date="1986" name="Gene">
        <title>Genomic organization and nucleotide sequences of two corn histone H4 genes.</title>
        <authorList>
            <person name="Philipps G."/>
            <person name="Chaubet N."/>
            <person name="Chaboute M.-E."/>
            <person name="Ehling M."/>
            <person name="Gigot C."/>
        </authorList>
    </citation>
    <scope>NUCLEOTIDE SEQUENCE [GENOMIC DNA] (H4C7 AND H4C14)</scope>
</reference>
<reference key="2">
    <citation type="journal article" date="1987" name="Physiol. Veg.">
        <title>Nucleotide sequences of two histone H3 and H4 genes of corn. Further insight into the structure and organization of the histone genes in higher plants.</title>
        <authorList>
            <person name="Gigot C."/>
            <person name="Chaubet N."/>
            <person name="Chaboute M.-E."/>
            <person name="Ehling M."/>
            <person name="Philipps G."/>
        </authorList>
    </citation>
    <scope>NUCLEOTIDE SEQUENCE [GENOMIC DNA] (H4C13)</scope>
</reference>
<reference key="3">
    <citation type="journal article" date="2006" name="Genetics">
        <title>Partitioning of the maize epigenome by the number of methyl groups on histone H3 lysines 9 and 27.</title>
        <authorList>
            <person name="Shi J."/>
            <person name="Dawe R.K."/>
        </authorList>
    </citation>
    <scope>SUBCELLULAR LOCATION</scope>
    <scope>METHYLATION AT LYS-21</scope>
</reference>
<dbReference type="EMBL" id="M13370">
    <property type="protein sequence ID" value="AAA33475.1"/>
    <property type="molecule type" value="Genomic_DNA"/>
</dbReference>
<dbReference type="EMBL" id="M13377">
    <property type="protein sequence ID" value="AAA33476.1"/>
    <property type="molecule type" value="Genomic_DNA"/>
</dbReference>
<dbReference type="EMBL" id="M36659">
    <property type="protein sequence ID" value="AAA33474.1"/>
    <property type="molecule type" value="Genomic_DNA"/>
</dbReference>
<dbReference type="PIR" id="A25642">
    <property type="entry name" value="HSZM4"/>
</dbReference>
<dbReference type="RefSeq" id="NP_001288381.1">
    <property type="nucleotide sequence ID" value="NM_001301452.1"/>
</dbReference>
<dbReference type="RefSeq" id="XP_008668988.1">
    <property type="nucleotide sequence ID" value="XM_008670766.1"/>
</dbReference>
<dbReference type="SMR" id="P62787"/>
<dbReference type="FunCoup" id="P62787">
    <property type="interactions" value="2661"/>
</dbReference>
<dbReference type="STRING" id="4577.P62787"/>
<dbReference type="iPTMnet" id="P62787"/>
<dbReference type="PaxDb" id="4577-AC196961.2_FGP003"/>
<dbReference type="EnsemblPlants" id="Zm00001eb072850_T001">
    <property type="protein sequence ID" value="Zm00001eb072850_P001"/>
    <property type="gene ID" value="Zm00001eb072850"/>
</dbReference>
<dbReference type="EnsemblPlants" id="Zm00001eb099930_T001">
    <property type="protein sequence ID" value="Zm00001eb099930_P001"/>
    <property type="gene ID" value="Zm00001eb099930"/>
</dbReference>
<dbReference type="EnsemblPlants" id="Zm00001eb123370_T001">
    <property type="protein sequence ID" value="Zm00001eb123370_P001"/>
    <property type="gene ID" value="Zm00001eb123370"/>
</dbReference>
<dbReference type="EnsemblPlants" id="Zm00001eb123370_T002">
    <property type="protein sequence ID" value="Zm00001eb123370_P002"/>
    <property type="gene ID" value="Zm00001eb123370"/>
</dbReference>
<dbReference type="EnsemblPlants" id="Zm00001eb148730_T001">
    <property type="protein sequence ID" value="Zm00001eb148730_P001"/>
    <property type="gene ID" value="Zm00001eb148730"/>
</dbReference>
<dbReference type="EnsemblPlants" id="Zm00001eb187430_T001">
    <property type="protein sequence ID" value="Zm00001eb187430_P001"/>
    <property type="gene ID" value="Zm00001eb187430"/>
</dbReference>
<dbReference type="EnsemblPlants" id="Zm00001eb313720_T001">
    <property type="protein sequence ID" value="Zm00001eb313720_P001"/>
    <property type="gene ID" value="Zm00001eb313720"/>
</dbReference>
<dbReference type="EnsemblPlants" id="Zm00001eb313730_T001">
    <property type="protein sequence ID" value="Zm00001eb313730_P001"/>
    <property type="gene ID" value="Zm00001eb313730"/>
</dbReference>
<dbReference type="EnsemblPlants" id="Zm00001eb321260_T001">
    <property type="protein sequence ID" value="Zm00001eb321260_P001"/>
    <property type="gene ID" value="Zm00001eb321260"/>
</dbReference>
<dbReference type="EnsemblPlants" id="Zm00001eb336310_T001">
    <property type="protein sequence ID" value="Zm00001eb336310_P001"/>
    <property type="gene ID" value="Zm00001eb336310"/>
</dbReference>
<dbReference type="EnsemblPlants" id="Zm00001eb351700_T001">
    <property type="protein sequence ID" value="Zm00001eb351700_P001"/>
    <property type="gene ID" value="Zm00001eb351700"/>
</dbReference>
<dbReference type="EnsemblPlants" id="Zm00001eb428040_T001">
    <property type="protein sequence ID" value="Zm00001eb428040_P001"/>
    <property type="gene ID" value="Zm00001eb428040"/>
</dbReference>
<dbReference type="GeneID" id="100192931"/>
<dbReference type="Gramene" id="Zm00001eb072850_T001">
    <property type="protein sequence ID" value="Zm00001eb072850_P001"/>
    <property type="gene ID" value="Zm00001eb072850"/>
</dbReference>
<dbReference type="Gramene" id="Zm00001eb099930_T001">
    <property type="protein sequence ID" value="Zm00001eb099930_P001"/>
    <property type="gene ID" value="Zm00001eb099930"/>
</dbReference>
<dbReference type="Gramene" id="Zm00001eb123370_T001">
    <property type="protein sequence ID" value="Zm00001eb123370_P001"/>
    <property type="gene ID" value="Zm00001eb123370"/>
</dbReference>
<dbReference type="Gramene" id="Zm00001eb123370_T002">
    <property type="protein sequence ID" value="Zm00001eb123370_P002"/>
    <property type="gene ID" value="Zm00001eb123370"/>
</dbReference>
<dbReference type="Gramene" id="Zm00001eb148730_T001">
    <property type="protein sequence ID" value="Zm00001eb148730_P001"/>
    <property type="gene ID" value="Zm00001eb148730"/>
</dbReference>
<dbReference type="Gramene" id="Zm00001eb187430_T001">
    <property type="protein sequence ID" value="Zm00001eb187430_P001"/>
    <property type="gene ID" value="Zm00001eb187430"/>
</dbReference>
<dbReference type="Gramene" id="Zm00001eb313720_T001">
    <property type="protein sequence ID" value="Zm00001eb313720_P001"/>
    <property type="gene ID" value="Zm00001eb313720"/>
</dbReference>
<dbReference type="Gramene" id="Zm00001eb313730_T001">
    <property type="protein sequence ID" value="Zm00001eb313730_P001"/>
    <property type="gene ID" value="Zm00001eb313730"/>
</dbReference>
<dbReference type="Gramene" id="Zm00001eb321260_T001">
    <property type="protein sequence ID" value="Zm00001eb321260_P001"/>
    <property type="gene ID" value="Zm00001eb321260"/>
</dbReference>
<dbReference type="Gramene" id="Zm00001eb336310_T001">
    <property type="protein sequence ID" value="Zm00001eb336310_P001"/>
    <property type="gene ID" value="Zm00001eb336310"/>
</dbReference>
<dbReference type="Gramene" id="Zm00001eb351700_T001">
    <property type="protein sequence ID" value="Zm00001eb351700_P001"/>
    <property type="gene ID" value="Zm00001eb351700"/>
</dbReference>
<dbReference type="Gramene" id="Zm00001eb428040_T001">
    <property type="protein sequence ID" value="Zm00001eb428040_P001"/>
    <property type="gene ID" value="Zm00001eb428040"/>
</dbReference>
<dbReference type="KEGG" id="zma:100192931"/>
<dbReference type="KEGG" id="zma:100278340"/>
<dbReference type="KEGG" id="zma:100282268"/>
<dbReference type="KEGG" id="zma:103631010"/>
<dbReference type="KEGG" id="zma:103633162"/>
<dbReference type="KEGG" id="zma:103634846"/>
<dbReference type="KEGG" id="zma:103635780"/>
<dbReference type="KEGG" id="zma:103636523"/>
<dbReference type="KEGG" id="zma:103646024"/>
<dbReference type="KEGG" id="zma:103646028"/>
<dbReference type="KEGG" id="zma:103649716"/>
<dbReference type="KEGG" id="zma:103651039"/>
<dbReference type="MaizeGDB" id="25155"/>
<dbReference type="eggNOG" id="KOG3467">
    <property type="taxonomic scope" value="Eukaryota"/>
</dbReference>
<dbReference type="HOGENOM" id="CLU_109117_2_3_1"/>
<dbReference type="InParanoid" id="P62787"/>
<dbReference type="OrthoDB" id="660799at2759"/>
<dbReference type="Proteomes" id="UP000007305">
    <property type="component" value="Chromosome 10"/>
</dbReference>
<dbReference type="Proteomes" id="UP000007305">
    <property type="component" value="Chromosome 2"/>
</dbReference>
<dbReference type="Proteomes" id="UP000007305">
    <property type="component" value="Chromosome 3"/>
</dbReference>
<dbReference type="Proteomes" id="UP000007305">
    <property type="component" value="Chromosome 4"/>
</dbReference>
<dbReference type="Proteomes" id="UP000007305">
    <property type="component" value="Chromosome 7"/>
</dbReference>
<dbReference type="Proteomes" id="UP000007305">
    <property type="component" value="Chromosome 8"/>
</dbReference>
<dbReference type="ExpressionAtlas" id="P62787">
    <property type="expression patterns" value="baseline and differential"/>
</dbReference>
<dbReference type="GO" id="GO:0000786">
    <property type="term" value="C:nucleosome"/>
    <property type="evidence" value="ECO:0007669"/>
    <property type="project" value="UniProtKB-KW"/>
</dbReference>
<dbReference type="GO" id="GO:0005634">
    <property type="term" value="C:nucleus"/>
    <property type="evidence" value="ECO:0007669"/>
    <property type="project" value="UniProtKB-SubCell"/>
</dbReference>
<dbReference type="GO" id="GO:0003677">
    <property type="term" value="F:DNA binding"/>
    <property type="evidence" value="ECO:0000318"/>
    <property type="project" value="GO_Central"/>
</dbReference>
<dbReference type="GO" id="GO:0046982">
    <property type="term" value="F:protein heterodimerization activity"/>
    <property type="evidence" value="ECO:0007669"/>
    <property type="project" value="InterPro"/>
</dbReference>
<dbReference type="GO" id="GO:0030527">
    <property type="term" value="F:structural constituent of chromatin"/>
    <property type="evidence" value="ECO:0007669"/>
    <property type="project" value="InterPro"/>
</dbReference>
<dbReference type="GO" id="GO:0006334">
    <property type="term" value="P:nucleosome assembly"/>
    <property type="evidence" value="ECO:0000318"/>
    <property type="project" value="GO_Central"/>
</dbReference>
<dbReference type="GO" id="GO:0009414">
    <property type="term" value="P:response to water deprivation"/>
    <property type="evidence" value="ECO:0007669"/>
    <property type="project" value="EnsemblPlants"/>
</dbReference>
<dbReference type="CDD" id="cd22912">
    <property type="entry name" value="HFD_H4"/>
    <property type="match status" value="1"/>
</dbReference>
<dbReference type="FunFam" id="1.10.20.10:FF:000002">
    <property type="entry name" value="Histone H4"/>
    <property type="match status" value="1"/>
</dbReference>
<dbReference type="Gene3D" id="1.10.20.10">
    <property type="entry name" value="Histone, subunit A"/>
    <property type="match status" value="1"/>
</dbReference>
<dbReference type="InterPro" id="IPR035425">
    <property type="entry name" value="CENP-T/H4_C"/>
</dbReference>
<dbReference type="InterPro" id="IPR009072">
    <property type="entry name" value="Histone-fold"/>
</dbReference>
<dbReference type="InterPro" id="IPR001951">
    <property type="entry name" value="Histone_H4"/>
</dbReference>
<dbReference type="InterPro" id="IPR019809">
    <property type="entry name" value="Histone_H4_CS"/>
</dbReference>
<dbReference type="PANTHER" id="PTHR10484">
    <property type="entry name" value="HISTONE H4"/>
    <property type="match status" value="1"/>
</dbReference>
<dbReference type="Pfam" id="PF15511">
    <property type="entry name" value="CENP-T_C"/>
    <property type="match status" value="1"/>
</dbReference>
<dbReference type="PRINTS" id="PR00623">
    <property type="entry name" value="HISTONEH4"/>
</dbReference>
<dbReference type="SMART" id="SM00417">
    <property type="entry name" value="H4"/>
    <property type="match status" value="1"/>
</dbReference>
<dbReference type="SUPFAM" id="SSF47113">
    <property type="entry name" value="Histone-fold"/>
    <property type="match status" value="1"/>
</dbReference>
<dbReference type="PROSITE" id="PS00047">
    <property type="entry name" value="HISTONE_H4"/>
    <property type="match status" value="1"/>
</dbReference>
<keyword id="KW-0007">Acetylation</keyword>
<keyword id="KW-0158">Chromosome</keyword>
<keyword id="KW-0238">DNA-binding</keyword>
<keyword id="KW-0488">Methylation</keyword>
<keyword id="KW-0544">Nucleosome core</keyword>
<keyword id="KW-0539">Nucleus</keyword>
<keyword id="KW-1185">Reference proteome</keyword>
<gene>
    <name type="primary">H4C7</name>
</gene>
<gene>
    <name type="primary">H4C13</name>
</gene>
<gene>
    <name type="primary">H4C14</name>
</gene>
<accession>P62787</accession>
<accession>P02308</accession>
<accession>P59258</accession>
<comment type="function">
    <text>Core component of nucleosome. Nucleosomes wrap and compact DNA into chromatin, limiting DNA accessibility to the cellular machineries which require DNA as a template. Histones thereby play a central role in transcription regulation, DNA repair, DNA replication and chromosomal stability. DNA accessibility is regulated via a complex set of post-translational modifications of histones, also called histone code, and nucleosome remodeling.</text>
</comment>
<comment type="subunit">
    <text>The nucleosome is a histone octamer containing two molecules each of H2A, H2B, H3 and H4 assembled in one H3-H4 heterotetramer and two H2A-H2B heterodimers. The octamer wraps approximately 147 bp of DNA.</text>
</comment>
<comment type="subcellular location">
    <subcellularLocation>
        <location evidence="3">Nucleus</location>
    </subcellularLocation>
    <subcellularLocation>
        <location evidence="3">Chromosome</location>
    </subcellularLocation>
</comment>
<comment type="PTM">
    <text>Lys-21Me2 and Lys-21Me3 not detected.</text>
</comment>
<comment type="similarity">
    <text evidence="4">Belongs to the histone H4 family.</text>
</comment>
<name>H4_MAIZE</name>
<protein>
    <recommendedName>
        <fullName>Histone H4</fullName>
    </recommendedName>
</protein>
<evidence type="ECO:0000250" key="1"/>
<evidence type="ECO:0000256" key="2">
    <source>
        <dbReference type="SAM" id="MobiDB-lite"/>
    </source>
</evidence>
<evidence type="ECO:0000269" key="3">
    <source>
    </source>
</evidence>
<evidence type="ECO:0000305" key="4"/>
<feature type="initiator methionine" description="Removed" evidence="1">
    <location>
        <position position="1"/>
    </location>
</feature>
<feature type="chain" id="PRO_0000158324" description="Histone H4">
    <location>
        <begin position="2"/>
        <end position="103"/>
    </location>
</feature>
<feature type="DNA-binding region">
    <location>
        <begin position="17"/>
        <end position="21"/>
    </location>
</feature>
<feature type="region of interest" description="Disordered" evidence="2">
    <location>
        <begin position="1"/>
        <end position="20"/>
    </location>
</feature>
<feature type="compositionally biased region" description="Gly residues" evidence="2">
    <location>
        <begin position="1"/>
        <end position="14"/>
    </location>
</feature>
<feature type="modified residue" description="N-acetylserine" evidence="1">
    <location>
        <position position="2"/>
    </location>
</feature>
<feature type="modified residue" description="N6-acetyllysine" evidence="1">
    <location>
        <position position="6"/>
    </location>
</feature>
<feature type="modified residue" description="N6-acetyllysine" evidence="1">
    <location>
        <position position="9"/>
    </location>
</feature>
<feature type="modified residue" description="N6-acetyllysine" evidence="1">
    <location>
        <position position="13"/>
    </location>
</feature>
<feature type="modified residue" description="N6-acetyllysine" evidence="1">
    <location>
        <position position="17"/>
    </location>
</feature>
<feature type="modified residue" description="N6-acetyllysine; alternate" evidence="1">
    <location>
        <position position="21"/>
    </location>
</feature>
<feature type="modified residue" description="N6-methyllysine; alternate" evidence="3">
    <location>
        <position position="21"/>
    </location>
</feature>